<reference key="1">
    <citation type="journal article" date="2008" name="PLoS ONE">
        <title>Comparative analysis of Acinetobacters: three genomes for three lifestyles.</title>
        <authorList>
            <person name="Vallenet D."/>
            <person name="Nordmann P."/>
            <person name="Barbe V."/>
            <person name="Poirel L."/>
            <person name="Mangenot S."/>
            <person name="Bataille E."/>
            <person name="Dossat C."/>
            <person name="Gas S."/>
            <person name="Kreimeyer A."/>
            <person name="Lenoble P."/>
            <person name="Oztas S."/>
            <person name="Poulain J."/>
            <person name="Segurens B."/>
            <person name="Robert C."/>
            <person name="Abergel C."/>
            <person name="Claverie J.-M."/>
            <person name="Raoult D."/>
            <person name="Medigue C."/>
            <person name="Weissenbach J."/>
            <person name="Cruveiller S."/>
        </authorList>
    </citation>
    <scope>NUCLEOTIDE SEQUENCE [LARGE SCALE GENOMIC DNA]</scope>
    <source>
        <strain>AYE</strain>
    </source>
</reference>
<proteinExistence type="inferred from homology"/>
<gene>
    <name evidence="1" type="primary">mscL</name>
    <name type="ordered locus">ABAYE0647</name>
</gene>
<organism>
    <name type="scientific">Acinetobacter baumannii (strain AYE)</name>
    <dbReference type="NCBI Taxonomy" id="509173"/>
    <lineage>
        <taxon>Bacteria</taxon>
        <taxon>Pseudomonadati</taxon>
        <taxon>Pseudomonadota</taxon>
        <taxon>Gammaproteobacteria</taxon>
        <taxon>Moraxellales</taxon>
        <taxon>Moraxellaceae</taxon>
        <taxon>Acinetobacter</taxon>
        <taxon>Acinetobacter calcoaceticus/baumannii complex</taxon>
    </lineage>
</organism>
<protein>
    <recommendedName>
        <fullName evidence="1">Large-conductance mechanosensitive channel</fullName>
    </recommendedName>
</protein>
<feature type="chain" id="PRO_1000094873" description="Large-conductance mechanosensitive channel">
    <location>
        <begin position="1"/>
        <end position="143"/>
    </location>
</feature>
<feature type="transmembrane region" description="Helical" evidence="1">
    <location>
        <begin position="10"/>
        <end position="30"/>
    </location>
</feature>
<feature type="transmembrane region" description="Helical" evidence="1">
    <location>
        <begin position="40"/>
        <end position="60"/>
    </location>
</feature>
<feature type="transmembrane region" description="Helical" evidence="1">
    <location>
        <begin position="86"/>
        <end position="106"/>
    </location>
</feature>
<keyword id="KW-0997">Cell inner membrane</keyword>
<keyword id="KW-1003">Cell membrane</keyword>
<keyword id="KW-0407">Ion channel</keyword>
<keyword id="KW-0406">Ion transport</keyword>
<keyword id="KW-0472">Membrane</keyword>
<keyword id="KW-0812">Transmembrane</keyword>
<keyword id="KW-1133">Transmembrane helix</keyword>
<keyword id="KW-0813">Transport</keyword>
<dbReference type="EMBL" id="CU459141">
    <property type="protein sequence ID" value="CAM85613.1"/>
    <property type="molecule type" value="Genomic_DNA"/>
</dbReference>
<dbReference type="RefSeq" id="WP_000022555.1">
    <property type="nucleotide sequence ID" value="NZ_JBDGFB010000017.1"/>
</dbReference>
<dbReference type="SMR" id="B0V4Z4"/>
<dbReference type="EnsemblBacteria" id="CAM85613">
    <property type="protein sequence ID" value="CAM85613"/>
    <property type="gene ID" value="ABAYE0647"/>
</dbReference>
<dbReference type="GeneID" id="92895113"/>
<dbReference type="KEGG" id="aby:ABAYE0647"/>
<dbReference type="HOGENOM" id="CLU_095787_0_1_6"/>
<dbReference type="GO" id="GO:0005886">
    <property type="term" value="C:plasma membrane"/>
    <property type="evidence" value="ECO:0007669"/>
    <property type="project" value="UniProtKB-SubCell"/>
</dbReference>
<dbReference type="GO" id="GO:0008381">
    <property type="term" value="F:mechanosensitive monoatomic ion channel activity"/>
    <property type="evidence" value="ECO:0007669"/>
    <property type="project" value="UniProtKB-UniRule"/>
</dbReference>
<dbReference type="Gene3D" id="1.10.1200.120">
    <property type="entry name" value="Large-conductance mechanosensitive channel, MscL, domain 1"/>
    <property type="match status" value="1"/>
</dbReference>
<dbReference type="HAMAP" id="MF_00115">
    <property type="entry name" value="MscL"/>
    <property type="match status" value="1"/>
</dbReference>
<dbReference type="InterPro" id="IPR019823">
    <property type="entry name" value="Mechanosensitive_channel_CS"/>
</dbReference>
<dbReference type="InterPro" id="IPR001185">
    <property type="entry name" value="MS_channel"/>
</dbReference>
<dbReference type="InterPro" id="IPR037673">
    <property type="entry name" value="MSC/AndL"/>
</dbReference>
<dbReference type="InterPro" id="IPR036019">
    <property type="entry name" value="MscL_channel"/>
</dbReference>
<dbReference type="NCBIfam" id="TIGR00220">
    <property type="entry name" value="mscL"/>
    <property type="match status" value="1"/>
</dbReference>
<dbReference type="NCBIfam" id="NF001843">
    <property type="entry name" value="PRK00567.1-4"/>
    <property type="match status" value="1"/>
</dbReference>
<dbReference type="NCBIfam" id="NF010557">
    <property type="entry name" value="PRK13952.1"/>
    <property type="match status" value="1"/>
</dbReference>
<dbReference type="PANTHER" id="PTHR30266:SF2">
    <property type="entry name" value="LARGE-CONDUCTANCE MECHANOSENSITIVE CHANNEL"/>
    <property type="match status" value="1"/>
</dbReference>
<dbReference type="PANTHER" id="PTHR30266">
    <property type="entry name" value="MECHANOSENSITIVE CHANNEL MSCL"/>
    <property type="match status" value="1"/>
</dbReference>
<dbReference type="Pfam" id="PF01741">
    <property type="entry name" value="MscL"/>
    <property type="match status" value="1"/>
</dbReference>
<dbReference type="PRINTS" id="PR01264">
    <property type="entry name" value="MECHCHANNEL"/>
</dbReference>
<dbReference type="SUPFAM" id="SSF81330">
    <property type="entry name" value="Gated mechanosensitive channel"/>
    <property type="match status" value="1"/>
</dbReference>
<dbReference type="PROSITE" id="PS01327">
    <property type="entry name" value="MSCL"/>
    <property type="match status" value="1"/>
</dbReference>
<comment type="function">
    <text evidence="1">Channel that opens in response to stretch forces in the membrane lipid bilayer. May participate in the regulation of osmotic pressure changes within the cell.</text>
</comment>
<comment type="subunit">
    <text evidence="1">Homopentamer.</text>
</comment>
<comment type="subcellular location">
    <subcellularLocation>
        <location evidence="1">Cell inner membrane</location>
        <topology evidence="1">Multi-pass membrane protein</topology>
    </subcellularLocation>
</comment>
<comment type="similarity">
    <text evidence="1">Belongs to the MscL family.</text>
</comment>
<name>MSCL_ACIBY</name>
<sequence length="143" mass="15783">MSIIQEFKEFAIKGNMMDLAIGVIIGGAFGKIVDSLVKDIIMPLITVITGGGVDFSQKFIVLGANPNNLQSLDALQKAGINVLTYGNFLTILINFLILAWVVFLMVKLLNKLRRDKNEPEAPAATPEDIQLLREIRDELKKQA</sequence>
<accession>B0V4Z4</accession>
<evidence type="ECO:0000255" key="1">
    <source>
        <dbReference type="HAMAP-Rule" id="MF_00115"/>
    </source>
</evidence>